<dbReference type="EC" id="2.3.2.23"/>
<dbReference type="EMBL" id="U33757">
    <property type="protein sequence ID" value="AAC49321.1"/>
    <property type="molecule type" value="Genomic_DNA"/>
</dbReference>
<dbReference type="EMBL" id="AB016890">
    <property type="protein sequence ID" value="BAB09775.1"/>
    <property type="molecule type" value="Genomic_DNA"/>
</dbReference>
<dbReference type="EMBL" id="CP002688">
    <property type="protein sequence ID" value="AED97168.2"/>
    <property type="molecule type" value="Genomic_DNA"/>
</dbReference>
<dbReference type="EMBL" id="AY080733">
    <property type="protein sequence ID" value="AAL86003.1"/>
    <property type="status" value="ALT_INIT"/>
    <property type="molecule type" value="mRNA"/>
</dbReference>
<dbReference type="EMBL" id="BT005798">
    <property type="protein sequence ID" value="AAO64200.1"/>
    <property type="status" value="ALT_INIT"/>
    <property type="molecule type" value="mRNA"/>
</dbReference>
<dbReference type="PIR" id="S71209">
    <property type="entry name" value="S71209"/>
</dbReference>
<dbReference type="RefSeq" id="NP_568902.3">
    <property type="nucleotide sequence ID" value="NM_125320.3"/>
</dbReference>
<dbReference type="SMR" id="Q42540"/>
<dbReference type="BioGRID" id="21292">
    <property type="interactions" value="1"/>
</dbReference>
<dbReference type="FunCoup" id="Q42540">
    <property type="interactions" value="3692"/>
</dbReference>
<dbReference type="STRING" id="3702.Q42540"/>
<dbReference type="iPTMnet" id="Q42540"/>
<dbReference type="PaxDb" id="3702-AT5G59300.1"/>
<dbReference type="ProteomicsDB" id="228693"/>
<dbReference type="EnsemblPlants" id="AT5G59300.1">
    <property type="protein sequence ID" value="AT5G59300.1"/>
    <property type="gene ID" value="AT5G59300"/>
</dbReference>
<dbReference type="GeneID" id="836048"/>
<dbReference type="Gramene" id="AT5G59300.1">
    <property type="protein sequence ID" value="AT5G59300.1"/>
    <property type="gene ID" value="AT5G59300"/>
</dbReference>
<dbReference type="KEGG" id="ath:AT5G59300"/>
<dbReference type="Araport" id="AT5G59300"/>
<dbReference type="TAIR" id="AT5G59300">
    <property type="gene designation" value="UBC7"/>
</dbReference>
<dbReference type="eggNOG" id="KOG0425">
    <property type="taxonomic scope" value="Eukaryota"/>
</dbReference>
<dbReference type="HOGENOM" id="CLU_030988_10_1_1"/>
<dbReference type="InParanoid" id="Q42540"/>
<dbReference type="OMA" id="MLCLNSQ"/>
<dbReference type="PhylomeDB" id="Q42540"/>
<dbReference type="UniPathway" id="UPA00143"/>
<dbReference type="PRO" id="PR:Q42540"/>
<dbReference type="Proteomes" id="UP000006548">
    <property type="component" value="Chromosome 5"/>
</dbReference>
<dbReference type="ExpressionAtlas" id="Q42540">
    <property type="expression patterns" value="baseline and differential"/>
</dbReference>
<dbReference type="GO" id="GO:0005524">
    <property type="term" value="F:ATP binding"/>
    <property type="evidence" value="ECO:0007669"/>
    <property type="project" value="UniProtKB-KW"/>
</dbReference>
<dbReference type="GO" id="GO:0061631">
    <property type="term" value="F:ubiquitin conjugating enzyme activity"/>
    <property type="evidence" value="ECO:0007669"/>
    <property type="project" value="UniProtKB-EC"/>
</dbReference>
<dbReference type="GO" id="GO:0016567">
    <property type="term" value="P:protein ubiquitination"/>
    <property type="evidence" value="ECO:0007669"/>
    <property type="project" value="UniProtKB-UniPathway"/>
</dbReference>
<dbReference type="CDD" id="cd23795">
    <property type="entry name" value="UBCc_UBE2G1"/>
    <property type="match status" value="1"/>
</dbReference>
<dbReference type="FunFam" id="3.10.110.10:FF:000025">
    <property type="entry name" value="ubiquitin-conjugating enzyme E2 7"/>
    <property type="match status" value="1"/>
</dbReference>
<dbReference type="Gene3D" id="3.10.110.10">
    <property type="entry name" value="Ubiquitin Conjugating Enzyme"/>
    <property type="match status" value="1"/>
</dbReference>
<dbReference type="InterPro" id="IPR050113">
    <property type="entry name" value="Ub_conjugating_enzyme"/>
</dbReference>
<dbReference type="InterPro" id="IPR000608">
    <property type="entry name" value="UBQ-conjugat_E2_core"/>
</dbReference>
<dbReference type="InterPro" id="IPR023313">
    <property type="entry name" value="UBQ-conjugating_AS"/>
</dbReference>
<dbReference type="InterPro" id="IPR016135">
    <property type="entry name" value="UBQ-conjugating_enzyme/RWD"/>
</dbReference>
<dbReference type="PANTHER" id="PTHR24067">
    <property type="entry name" value="UBIQUITIN-CONJUGATING ENZYME E2"/>
    <property type="match status" value="1"/>
</dbReference>
<dbReference type="Pfam" id="PF00179">
    <property type="entry name" value="UQ_con"/>
    <property type="match status" value="1"/>
</dbReference>
<dbReference type="SMART" id="SM00212">
    <property type="entry name" value="UBCc"/>
    <property type="match status" value="1"/>
</dbReference>
<dbReference type="SUPFAM" id="SSF54495">
    <property type="entry name" value="UBC-like"/>
    <property type="match status" value="1"/>
</dbReference>
<dbReference type="PROSITE" id="PS00183">
    <property type="entry name" value="UBC_1"/>
    <property type="match status" value="1"/>
</dbReference>
<dbReference type="PROSITE" id="PS50127">
    <property type="entry name" value="UBC_2"/>
    <property type="match status" value="1"/>
</dbReference>
<reference key="1">
    <citation type="journal article" date="1996" name="J. Biol. Chem.">
        <title>The Arabidopsis thaliana UBC7/13/14 genes encode a family of multiubiquitin chain-forming E2 enzymes.</title>
        <authorList>
            <person name="van Nocker S."/>
            <person name="Walker J.M."/>
            <person name="Vierstra R.D."/>
        </authorList>
    </citation>
    <scope>NUCLEOTIDE SEQUENCE [GENOMIC DNA]</scope>
    <scope>FUNCTION</scope>
    <source>
        <strain>cv. Columbia</strain>
        <tissue>Seedling</tissue>
    </source>
</reference>
<reference key="2">
    <citation type="journal article" date="1998" name="DNA Res.">
        <title>Structural analysis of Arabidopsis thaliana chromosome 5. VIII. Sequence features of the regions of 1,081,958 bp covered by seventeen physically assigned P1 and TAC clones.</title>
        <authorList>
            <person name="Asamizu E."/>
            <person name="Sato S."/>
            <person name="Kaneko T."/>
            <person name="Nakamura Y."/>
            <person name="Kotani H."/>
            <person name="Miyajima N."/>
            <person name="Tabata S."/>
        </authorList>
    </citation>
    <scope>NUCLEOTIDE SEQUENCE [LARGE SCALE GENOMIC DNA]</scope>
    <source>
        <strain>cv. Columbia</strain>
    </source>
</reference>
<reference key="3">
    <citation type="journal article" date="2017" name="Plant J.">
        <title>Araport11: a complete reannotation of the Arabidopsis thaliana reference genome.</title>
        <authorList>
            <person name="Cheng C.Y."/>
            <person name="Krishnakumar V."/>
            <person name="Chan A.P."/>
            <person name="Thibaud-Nissen F."/>
            <person name="Schobel S."/>
            <person name="Town C.D."/>
        </authorList>
    </citation>
    <scope>GENOME REANNOTATION</scope>
    <source>
        <strain>cv. Columbia</strain>
    </source>
</reference>
<reference key="4">
    <citation type="journal article" date="2003" name="Science">
        <title>Empirical analysis of transcriptional activity in the Arabidopsis genome.</title>
        <authorList>
            <person name="Yamada K."/>
            <person name="Lim J."/>
            <person name="Dale J.M."/>
            <person name="Chen H."/>
            <person name="Shinn P."/>
            <person name="Palm C.J."/>
            <person name="Southwick A.M."/>
            <person name="Wu H.C."/>
            <person name="Kim C.J."/>
            <person name="Nguyen M."/>
            <person name="Pham P.K."/>
            <person name="Cheuk R.F."/>
            <person name="Karlin-Newmann G."/>
            <person name="Liu S.X."/>
            <person name="Lam B."/>
            <person name="Sakano H."/>
            <person name="Wu T."/>
            <person name="Yu G."/>
            <person name="Miranda M."/>
            <person name="Quach H.L."/>
            <person name="Tripp M."/>
            <person name="Chang C.H."/>
            <person name="Lee J.M."/>
            <person name="Toriumi M.J."/>
            <person name="Chan M.M."/>
            <person name="Tang C.C."/>
            <person name="Onodera C.S."/>
            <person name="Deng J.M."/>
            <person name="Akiyama K."/>
            <person name="Ansari Y."/>
            <person name="Arakawa T."/>
            <person name="Banh J."/>
            <person name="Banno F."/>
            <person name="Bowser L."/>
            <person name="Brooks S.Y."/>
            <person name="Carninci P."/>
            <person name="Chao Q."/>
            <person name="Choy N."/>
            <person name="Enju A."/>
            <person name="Goldsmith A.D."/>
            <person name="Gurjal M."/>
            <person name="Hansen N.F."/>
            <person name="Hayashizaki Y."/>
            <person name="Johnson-Hopson C."/>
            <person name="Hsuan V.W."/>
            <person name="Iida K."/>
            <person name="Karnes M."/>
            <person name="Khan S."/>
            <person name="Koesema E."/>
            <person name="Ishida J."/>
            <person name="Jiang P.X."/>
            <person name="Jones T."/>
            <person name="Kawai J."/>
            <person name="Kamiya A."/>
            <person name="Meyers C."/>
            <person name="Nakajima M."/>
            <person name="Narusaka M."/>
            <person name="Seki M."/>
            <person name="Sakurai T."/>
            <person name="Satou M."/>
            <person name="Tamse R."/>
            <person name="Vaysberg M."/>
            <person name="Wallender E.K."/>
            <person name="Wong C."/>
            <person name="Yamamura Y."/>
            <person name="Yuan S."/>
            <person name="Shinozaki K."/>
            <person name="Davis R.W."/>
            <person name="Theologis A."/>
            <person name="Ecker J.R."/>
        </authorList>
    </citation>
    <scope>NUCLEOTIDE SEQUENCE [LARGE SCALE MRNA]</scope>
    <source>
        <strain>cv. Columbia</strain>
    </source>
</reference>
<reference key="5">
    <citation type="journal article" date="2012" name="Mol. Cell. Proteomics">
        <title>Comparative large-scale characterisation of plant vs. mammal proteins reveals similar and idiosyncratic N-alpha acetylation features.</title>
        <authorList>
            <person name="Bienvenut W.V."/>
            <person name="Sumpton D."/>
            <person name="Martinez A."/>
            <person name="Lilla S."/>
            <person name="Espagne C."/>
            <person name="Meinnel T."/>
            <person name="Giglione C."/>
        </authorList>
    </citation>
    <scope>ACETYLATION [LARGE SCALE ANALYSIS] AT ALA-2</scope>
    <scope>CLEAVAGE OF INITIATOR METHIONINE [LARGE SCALE ANALYSIS]</scope>
    <scope>IDENTIFICATION BY MASS SPECTROMETRY [LARGE SCALE ANALYSIS]</scope>
</reference>
<keyword id="KW-0007">Acetylation</keyword>
<keyword id="KW-0067">ATP-binding</keyword>
<keyword id="KW-0547">Nucleotide-binding</keyword>
<keyword id="KW-1185">Reference proteome</keyword>
<keyword id="KW-0808">Transferase</keyword>
<keyword id="KW-0833">Ubl conjugation pathway</keyword>
<gene>
    <name type="primary">UBC7</name>
    <name type="ordered locus">At5g59300</name>
    <name type="ORF">MNC17.21</name>
</gene>
<proteinExistence type="evidence at protein level"/>
<accession>Q42540</accession>
<accession>F4KHV0</accession>
<accession>Q8RXQ3</accession>
<organism>
    <name type="scientific">Arabidopsis thaliana</name>
    <name type="common">Mouse-ear cress</name>
    <dbReference type="NCBI Taxonomy" id="3702"/>
    <lineage>
        <taxon>Eukaryota</taxon>
        <taxon>Viridiplantae</taxon>
        <taxon>Streptophyta</taxon>
        <taxon>Embryophyta</taxon>
        <taxon>Tracheophyta</taxon>
        <taxon>Spermatophyta</taxon>
        <taxon>Magnoliopsida</taxon>
        <taxon>eudicotyledons</taxon>
        <taxon>Gunneridae</taxon>
        <taxon>Pentapetalae</taxon>
        <taxon>rosids</taxon>
        <taxon>malvids</taxon>
        <taxon>Brassicales</taxon>
        <taxon>Brassicaceae</taxon>
        <taxon>Camelineae</taxon>
        <taxon>Arabidopsis</taxon>
    </lineage>
</organism>
<feature type="initiator methionine" description="Removed" evidence="5">
    <location>
        <position position="1"/>
    </location>
</feature>
<feature type="chain" id="PRO_0000082586" description="Ubiquitin-conjugating enzyme E2 7">
    <location>
        <begin position="2"/>
        <end position="166"/>
    </location>
</feature>
<feature type="domain" description="UBC core" evidence="1">
    <location>
        <begin position="4"/>
        <end position="164"/>
    </location>
</feature>
<feature type="active site" description="Glycyl thioester intermediate" evidence="1 2">
    <location>
        <position position="89"/>
    </location>
</feature>
<feature type="modified residue" description="N-acetylalanine" evidence="5">
    <location>
        <position position="2"/>
    </location>
</feature>
<name>UBC7_ARATH</name>
<evidence type="ECO:0000255" key="1">
    <source>
        <dbReference type="PROSITE-ProRule" id="PRU00388"/>
    </source>
</evidence>
<evidence type="ECO:0000255" key="2">
    <source>
        <dbReference type="PROSITE-ProRule" id="PRU10133"/>
    </source>
</evidence>
<evidence type="ECO:0000269" key="3">
    <source>
    </source>
</evidence>
<evidence type="ECO:0000305" key="4"/>
<evidence type="ECO:0007744" key="5">
    <source>
    </source>
</evidence>
<sequence>MASQASLLLQKQLKDLCKHPVDGFSAGLVDEKNIFEWSVTIIGPPDTLYEGGFFNAIMTFPQNYPNSPPTVRFTSDMWHPNVYSDGRVCISILHPPGDDPSGYELASERWTPVHTVESIMLSIISMLSGPNDESPANVEAAKEWRDKRDEFKKKVSRCVRKSQEMF</sequence>
<comment type="function">
    <text evidence="3">Accepts the ubiquitin from the E1 complex and catalyzes its covalent attachment to other proteins. Involved in the formation of multiubiquitin chains. Signal the protein for selective degradation.</text>
</comment>
<comment type="catalytic activity">
    <reaction evidence="1 2">
        <text>S-ubiquitinyl-[E1 ubiquitin-activating enzyme]-L-cysteine + [E2 ubiquitin-conjugating enzyme]-L-cysteine = [E1 ubiquitin-activating enzyme]-L-cysteine + S-ubiquitinyl-[E2 ubiquitin-conjugating enzyme]-L-cysteine.</text>
        <dbReference type="EC" id="2.3.2.23"/>
    </reaction>
</comment>
<comment type="pathway">
    <text evidence="1">Protein modification; protein ubiquitination.</text>
</comment>
<comment type="similarity">
    <text evidence="1">Belongs to the ubiquitin-conjugating enzyme family.</text>
</comment>
<comment type="sequence caution" evidence="4">
    <conflict type="erroneous initiation">
        <sequence resource="EMBL-CDS" id="AAL86003"/>
    </conflict>
    <text>Extended N-terminus.</text>
</comment>
<comment type="sequence caution" evidence="4">
    <conflict type="erroneous initiation">
        <sequence resource="EMBL-CDS" id="AAO64200"/>
    </conflict>
    <text>Extended N-terminus.</text>
</comment>
<protein>
    <recommendedName>
        <fullName>Ubiquitin-conjugating enzyme E2 7</fullName>
        <ecNumber>2.3.2.23</ecNumber>
    </recommendedName>
    <alternativeName>
        <fullName>E2 ubiquitin-conjugating enzyme 7</fullName>
    </alternativeName>
    <alternativeName>
        <fullName>Ubiquitin carrier protein 7</fullName>
    </alternativeName>
    <alternativeName>
        <fullName>Ubiquitin-protein ligase 7</fullName>
    </alternativeName>
</protein>